<accession>Q9PVK2</accession>
<protein>
    <recommendedName>
        <fullName>Alpha-enolase</fullName>
        <ecNumber>4.2.1.11</ecNumber>
    </recommendedName>
    <alternativeName>
        <fullName>2-phospho-D-glycerate hydro-lyase</fullName>
    </alternativeName>
    <alternativeName>
        <fullName>Phosphopyruvate hydratase</fullName>
    </alternativeName>
</protein>
<evidence type="ECO:0000250" key="1"/>
<evidence type="ECO:0000305" key="2"/>
<name>ENOA_ALLMI</name>
<comment type="catalytic activity">
    <reaction>
        <text>(2R)-2-phosphoglycerate = phosphoenolpyruvate + H2O</text>
        <dbReference type="Rhea" id="RHEA:10164"/>
        <dbReference type="ChEBI" id="CHEBI:15377"/>
        <dbReference type="ChEBI" id="CHEBI:58289"/>
        <dbReference type="ChEBI" id="CHEBI:58702"/>
        <dbReference type="EC" id="4.2.1.11"/>
    </reaction>
</comment>
<comment type="cofactor">
    <cofactor evidence="1">
        <name>Mg(2+)</name>
        <dbReference type="ChEBI" id="CHEBI:18420"/>
    </cofactor>
    <text evidence="1">Binds two Mg(2+) per subunit. Required for catalysis and for stabilizing the dimer.</text>
</comment>
<comment type="pathway">
    <text>Carbohydrate degradation; glycolysis; pyruvate from D-glyceraldehyde 3-phosphate: step 4/5.</text>
</comment>
<comment type="subunit">
    <text evidence="1">Homodimer.</text>
</comment>
<comment type="subcellular location">
    <subcellularLocation>
        <location>Cytoplasm</location>
    </subcellularLocation>
</comment>
<comment type="similarity">
    <text evidence="2">Belongs to the enolase family.</text>
</comment>
<sequence length="434" mass="47322">MSILKIHAREIFDSRGNPTVEVDLYTSKGLFRAAVPSGASTGIYEALELRDNDKTRFMGKGVSKAVAHVNKTIAPALISKNISVVEQEKIDRLMLEMDGSENKSKFGANAILGVSLAVCKAGAAEKGVPLYRHIADLAGNPEVILPVPAFNVINGGSHAGNKLAMQEFMILPVGAESFKEAMRIGAEVYHNLKNVIKEKYGKDATNVGDEGGFAPNILENKEALELLKNAINKAGYSDKIVIGMDVAASEFYRDGKYDLDFKSPDDPSRYITPDQLADLYKSFVKNYPVVSIEDPFDQDDWAAWKKFTASVGIQVVGDDLTVTNPKRIAKAVDDKACNCLLLKVNQIGSVTESLQACKLAQSNGWGVMVSHRSGETEDTFIADLVVGLCTGQIKTGAPCRSERLAKYNQILRIEEELGSKARFAGRNFRNPRIN</sequence>
<feature type="initiator methionine" description="Removed" evidence="1">
    <location>
        <position position="1"/>
    </location>
</feature>
<feature type="chain" id="PRO_0000134102" description="Alpha-enolase">
    <location>
        <begin position="2"/>
        <end position="434"/>
    </location>
</feature>
<feature type="active site" description="Proton donor" evidence="1">
    <location>
        <position position="210"/>
    </location>
</feature>
<feature type="active site" description="Proton acceptor" evidence="1">
    <location>
        <position position="343"/>
    </location>
</feature>
<feature type="binding site" evidence="1">
    <location>
        <position position="40"/>
    </location>
    <ligand>
        <name>Mg(2+)</name>
        <dbReference type="ChEBI" id="CHEBI:18420"/>
        <label>1</label>
    </ligand>
</feature>
<feature type="binding site" evidence="1">
    <location>
        <position position="158"/>
    </location>
    <ligand>
        <name>substrate</name>
    </ligand>
</feature>
<feature type="binding site" evidence="1">
    <location>
        <position position="167"/>
    </location>
    <ligand>
        <name>substrate</name>
    </ligand>
</feature>
<feature type="binding site" evidence="1">
    <location>
        <position position="245"/>
    </location>
    <ligand>
        <name>Mg(2+)</name>
        <dbReference type="ChEBI" id="CHEBI:18420"/>
        <label>2</label>
    </ligand>
</feature>
<feature type="binding site" evidence="1">
    <location>
        <position position="293"/>
    </location>
    <ligand>
        <name>Mg(2+)</name>
        <dbReference type="ChEBI" id="CHEBI:18420"/>
        <label>2</label>
    </ligand>
</feature>
<feature type="binding site" evidence="1">
    <location>
        <position position="293"/>
    </location>
    <ligand>
        <name>substrate</name>
    </ligand>
</feature>
<feature type="binding site" evidence="1">
    <location>
        <position position="318"/>
    </location>
    <ligand>
        <name>Mg(2+)</name>
        <dbReference type="ChEBI" id="CHEBI:18420"/>
        <label>2</label>
    </ligand>
</feature>
<feature type="binding site" evidence="1">
    <location>
        <position position="318"/>
    </location>
    <ligand>
        <name>substrate</name>
    </ligand>
</feature>
<feature type="binding site" evidence="1">
    <location>
        <begin position="370"/>
        <end position="373"/>
    </location>
    <ligand>
        <name>substrate</name>
    </ligand>
</feature>
<feature type="binding site" evidence="1">
    <location>
        <position position="394"/>
    </location>
    <ligand>
        <name>substrate</name>
    </ligand>
</feature>
<dbReference type="EC" id="4.2.1.11"/>
<dbReference type="EMBL" id="AF072586">
    <property type="protein sequence ID" value="AAD41643.1"/>
    <property type="molecule type" value="mRNA"/>
</dbReference>
<dbReference type="RefSeq" id="NP_001274198.1">
    <property type="nucleotide sequence ID" value="NM_001287269.1"/>
</dbReference>
<dbReference type="SMR" id="Q9PVK2"/>
<dbReference type="GeneID" id="102573637"/>
<dbReference type="KEGG" id="amj:102573637"/>
<dbReference type="CTD" id="2023"/>
<dbReference type="eggNOG" id="KOG2670">
    <property type="taxonomic scope" value="Eukaryota"/>
</dbReference>
<dbReference type="OrthoDB" id="1739814at2759"/>
<dbReference type="UniPathway" id="UPA00109">
    <property type="reaction ID" value="UER00187"/>
</dbReference>
<dbReference type="GO" id="GO:0000015">
    <property type="term" value="C:phosphopyruvate hydratase complex"/>
    <property type="evidence" value="ECO:0007669"/>
    <property type="project" value="InterPro"/>
</dbReference>
<dbReference type="GO" id="GO:0000287">
    <property type="term" value="F:magnesium ion binding"/>
    <property type="evidence" value="ECO:0007669"/>
    <property type="project" value="InterPro"/>
</dbReference>
<dbReference type="GO" id="GO:0004634">
    <property type="term" value="F:phosphopyruvate hydratase activity"/>
    <property type="evidence" value="ECO:0007669"/>
    <property type="project" value="UniProtKB-EC"/>
</dbReference>
<dbReference type="GO" id="GO:0006096">
    <property type="term" value="P:glycolytic process"/>
    <property type="evidence" value="ECO:0007669"/>
    <property type="project" value="UniProtKB-UniPathway"/>
</dbReference>
<dbReference type="CDD" id="cd03313">
    <property type="entry name" value="enolase"/>
    <property type="match status" value="1"/>
</dbReference>
<dbReference type="FunFam" id="3.30.390.10:FF:000001">
    <property type="entry name" value="Enolase"/>
    <property type="match status" value="1"/>
</dbReference>
<dbReference type="FunFam" id="3.20.20.120:FF:000002">
    <property type="entry name" value="Enolase 1"/>
    <property type="match status" value="1"/>
</dbReference>
<dbReference type="Gene3D" id="3.20.20.120">
    <property type="entry name" value="Enolase-like C-terminal domain"/>
    <property type="match status" value="1"/>
</dbReference>
<dbReference type="Gene3D" id="3.30.390.10">
    <property type="entry name" value="Enolase-like, N-terminal domain"/>
    <property type="match status" value="1"/>
</dbReference>
<dbReference type="HAMAP" id="MF_00318">
    <property type="entry name" value="Enolase"/>
    <property type="match status" value="1"/>
</dbReference>
<dbReference type="InterPro" id="IPR000941">
    <property type="entry name" value="Enolase"/>
</dbReference>
<dbReference type="InterPro" id="IPR036849">
    <property type="entry name" value="Enolase-like_C_sf"/>
</dbReference>
<dbReference type="InterPro" id="IPR029017">
    <property type="entry name" value="Enolase-like_N"/>
</dbReference>
<dbReference type="InterPro" id="IPR020810">
    <property type="entry name" value="Enolase_C"/>
</dbReference>
<dbReference type="InterPro" id="IPR020809">
    <property type="entry name" value="Enolase_CS"/>
</dbReference>
<dbReference type="InterPro" id="IPR020811">
    <property type="entry name" value="Enolase_N"/>
</dbReference>
<dbReference type="NCBIfam" id="TIGR01060">
    <property type="entry name" value="eno"/>
    <property type="match status" value="1"/>
</dbReference>
<dbReference type="PANTHER" id="PTHR11902:SF12">
    <property type="entry name" value="ALPHA-ENOLASE"/>
    <property type="match status" value="1"/>
</dbReference>
<dbReference type="PANTHER" id="PTHR11902">
    <property type="entry name" value="ENOLASE"/>
    <property type="match status" value="1"/>
</dbReference>
<dbReference type="Pfam" id="PF00113">
    <property type="entry name" value="Enolase_C"/>
    <property type="match status" value="1"/>
</dbReference>
<dbReference type="Pfam" id="PF03952">
    <property type="entry name" value="Enolase_N"/>
    <property type="match status" value="1"/>
</dbReference>
<dbReference type="PIRSF" id="PIRSF001400">
    <property type="entry name" value="Enolase"/>
    <property type="match status" value="1"/>
</dbReference>
<dbReference type="PRINTS" id="PR00148">
    <property type="entry name" value="ENOLASE"/>
</dbReference>
<dbReference type="SFLD" id="SFLDS00001">
    <property type="entry name" value="Enolase"/>
    <property type="match status" value="1"/>
</dbReference>
<dbReference type="SFLD" id="SFLDF00002">
    <property type="entry name" value="enolase"/>
    <property type="match status" value="1"/>
</dbReference>
<dbReference type="SMART" id="SM01192">
    <property type="entry name" value="Enolase_C"/>
    <property type="match status" value="1"/>
</dbReference>
<dbReference type="SMART" id="SM01193">
    <property type="entry name" value="Enolase_N"/>
    <property type="match status" value="1"/>
</dbReference>
<dbReference type="SUPFAM" id="SSF51604">
    <property type="entry name" value="Enolase C-terminal domain-like"/>
    <property type="match status" value="1"/>
</dbReference>
<dbReference type="SUPFAM" id="SSF54826">
    <property type="entry name" value="Enolase N-terminal domain-like"/>
    <property type="match status" value="1"/>
</dbReference>
<dbReference type="PROSITE" id="PS00164">
    <property type="entry name" value="ENOLASE"/>
    <property type="match status" value="1"/>
</dbReference>
<organism>
    <name type="scientific">Alligator mississippiensis</name>
    <name type="common">American alligator</name>
    <dbReference type="NCBI Taxonomy" id="8496"/>
    <lineage>
        <taxon>Eukaryota</taxon>
        <taxon>Metazoa</taxon>
        <taxon>Chordata</taxon>
        <taxon>Craniata</taxon>
        <taxon>Vertebrata</taxon>
        <taxon>Euteleostomi</taxon>
        <taxon>Archelosauria</taxon>
        <taxon>Archosauria</taxon>
        <taxon>Crocodylia</taxon>
        <taxon>Alligatoridae</taxon>
        <taxon>Alligatorinae</taxon>
        <taxon>Alligator</taxon>
    </lineage>
</organism>
<keyword id="KW-0963">Cytoplasm</keyword>
<keyword id="KW-0324">Glycolysis</keyword>
<keyword id="KW-0456">Lyase</keyword>
<keyword id="KW-0460">Magnesium</keyword>
<keyword id="KW-0479">Metal-binding</keyword>
<proteinExistence type="evidence at transcript level"/>
<reference key="1">
    <citation type="journal article" date="1999" name="Mol. Phylogenet. Evol.">
        <title>Molecular evidence for a clade of turtles.</title>
        <authorList>
            <person name="Mannen H."/>
            <person name="Li S.S.-L."/>
        </authorList>
    </citation>
    <scope>NUCLEOTIDE SEQUENCE [MRNA]</scope>
    <source>
        <tissue>Muscle</tissue>
    </source>
</reference>